<keyword id="KW-1185">Reference proteome</keyword>
<keyword id="KW-0687">Ribonucleoprotein</keyword>
<keyword id="KW-0689">Ribosomal protein</keyword>
<keyword id="KW-0694">RNA-binding</keyword>
<keyword id="KW-0699">rRNA-binding</keyword>
<sequence>MELNTLKPAKNSVKQNTRYGRGQGSGKGGTSTRGHKGAKSRSGYKSKPGFEGGQLPLQRRLPMYGFKNPNRVSYKPINLDTIQQLAEKAQLTVINPEVLHQHGLVSKRDKCKILGNGLLKTKLEVTAHAFSASASAAIEKLGGKANILNIYA</sequence>
<comment type="function">
    <text evidence="1">Binds to the 23S rRNA.</text>
</comment>
<comment type="subunit">
    <text evidence="1">Part of the 50S ribosomal subunit.</text>
</comment>
<comment type="similarity">
    <text evidence="1">Belongs to the universal ribosomal protein uL15 family.</text>
</comment>
<accession>B3EUK4</accession>
<protein>
    <recommendedName>
        <fullName evidence="1">Large ribosomal subunit protein uL15</fullName>
    </recommendedName>
    <alternativeName>
        <fullName evidence="3">50S ribosomal protein L15</fullName>
    </alternativeName>
</protein>
<reference key="1">
    <citation type="journal article" date="2010" name="J. Bacteriol.">
        <title>The genome of the amoeba symbiont 'Candidatus Amoebophilus asiaticus' reveals common mechanisms for host cell interaction among amoeba-associated bacteria.</title>
        <authorList>
            <person name="Schmitz-Esser S."/>
            <person name="Tischler P."/>
            <person name="Arnold R."/>
            <person name="Montanaro J."/>
            <person name="Wagner M."/>
            <person name="Rattei T."/>
            <person name="Horn M."/>
        </authorList>
    </citation>
    <scope>NUCLEOTIDE SEQUENCE [LARGE SCALE GENOMIC DNA]</scope>
    <source>
        <strain>5a2</strain>
    </source>
</reference>
<proteinExistence type="inferred from homology"/>
<name>RL15_AMOA5</name>
<gene>
    <name evidence="1" type="primary">rplO</name>
    <name type="ordered locus">Aasi_0178</name>
</gene>
<dbReference type="EMBL" id="CP001102">
    <property type="protein sequence ID" value="ACE05623.1"/>
    <property type="molecule type" value="Genomic_DNA"/>
</dbReference>
<dbReference type="RefSeq" id="WP_012472388.1">
    <property type="nucleotide sequence ID" value="NC_010830.1"/>
</dbReference>
<dbReference type="SMR" id="B3EUK4"/>
<dbReference type="STRING" id="452471.Aasi_0178"/>
<dbReference type="KEGG" id="aas:Aasi_0178"/>
<dbReference type="eggNOG" id="COG0200">
    <property type="taxonomic scope" value="Bacteria"/>
</dbReference>
<dbReference type="HOGENOM" id="CLU_055188_4_0_10"/>
<dbReference type="OrthoDB" id="9810293at2"/>
<dbReference type="Proteomes" id="UP000001227">
    <property type="component" value="Chromosome"/>
</dbReference>
<dbReference type="GO" id="GO:0022625">
    <property type="term" value="C:cytosolic large ribosomal subunit"/>
    <property type="evidence" value="ECO:0007669"/>
    <property type="project" value="TreeGrafter"/>
</dbReference>
<dbReference type="GO" id="GO:0019843">
    <property type="term" value="F:rRNA binding"/>
    <property type="evidence" value="ECO:0007669"/>
    <property type="project" value="UniProtKB-UniRule"/>
</dbReference>
<dbReference type="GO" id="GO:0003735">
    <property type="term" value="F:structural constituent of ribosome"/>
    <property type="evidence" value="ECO:0007669"/>
    <property type="project" value="InterPro"/>
</dbReference>
<dbReference type="GO" id="GO:0006412">
    <property type="term" value="P:translation"/>
    <property type="evidence" value="ECO:0007669"/>
    <property type="project" value="UniProtKB-UniRule"/>
</dbReference>
<dbReference type="Gene3D" id="3.100.10.10">
    <property type="match status" value="1"/>
</dbReference>
<dbReference type="HAMAP" id="MF_01341">
    <property type="entry name" value="Ribosomal_uL15"/>
    <property type="match status" value="1"/>
</dbReference>
<dbReference type="InterPro" id="IPR030878">
    <property type="entry name" value="Ribosomal_uL15"/>
</dbReference>
<dbReference type="InterPro" id="IPR021131">
    <property type="entry name" value="Ribosomal_uL15/eL18"/>
</dbReference>
<dbReference type="InterPro" id="IPR036227">
    <property type="entry name" value="Ribosomal_uL15/eL18_sf"/>
</dbReference>
<dbReference type="InterPro" id="IPR005749">
    <property type="entry name" value="Ribosomal_uL15_bac-type"/>
</dbReference>
<dbReference type="InterPro" id="IPR001196">
    <property type="entry name" value="Ribosomal_uL15_CS"/>
</dbReference>
<dbReference type="NCBIfam" id="TIGR01071">
    <property type="entry name" value="rplO_bact"/>
    <property type="match status" value="1"/>
</dbReference>
<dbReference type="PANTHER" id="PTHR12934">
    <property type="entry name" value="50S RIBOSOMAL PROTEIN L15"/>
    <property type="match status" value="1"/>
</dbReference>
<dbReference type="PANTHER" id="PTHR12934:SF11">
    <property type="entry name" value="LARGE RIBOSOMAL SUBUNIT PROTEIN UL15M"/>
    <property type="match status" value="1"/>
</dbReference>
<dbReference type="Pfam" id="PF00828">
    <property type="entry name" value="Ribosomal_L27A"/>
    <property type="match status" value="1"/>
</dbReference>
<dbReference type="SUPFAM" id="SSF52080">
    <property type="entry name" value="Ribosomal proteins L15p and L18e"/>
    <property type="match status" value="1"/>
</dbReference>
<dbReference type="PROSITE" id="PS00475">
    <property type="entry name" value="RIBOSOMAL_L15"/>
    <property type="match status" value="1"/>
</dbReference>
<feature type="chain" id="PRO_1000142768" description="Large ribosomal subunit protein uL15">
    <location>
        <begin position="1"/>
        <end position="152"/>
    </location>
</feature>
<feature type="region of interest" description="Disordered" evidence="2">
    <location>
        <begin position="1"/>
        <end position="56"/>
    </location>
</feature>
<feature type="compositionally biased region" description="Gly residues" evidence="2">
    <location>
        <begin position="21"/>
        <end position="31"/>
    </location>
</feature>
<feature type="compositionally biased region" description="Basic residues" evidence="2">
    <location>
        <begin position="33"/>
        <end position="44"/>
    </location>
</feature>
<evidence type="ECO:0000255" key="1">
    <source>
        <dbReference type="HAMAP-Rule" id="MF_01341"/>
    </source>
</evidence>
<evidence type="ECO:0000256" key="2">
    <source>
        <dbReference type="SAM" id="MobiDB-lite"/>
    </source>
</evidence>
<evidence type="ECO:0000305" key="3"/>
<organism>
    <name type="scientific">Amoebophilus asiaticus (strain 5a2)</name>
    <dbReference type="NCBI Taxonomy" id="452471"/>
    <lineage>
        <taxon>Bacteria</taxon>
        <taxon>Pseudomonadati</taxon>
        <taxon>Bacteroidota</taxon>
        <taxon>Cytophagia</taxon>
        <taxon>Cytophagales</taxon>
        <taxon>Amoebophilaceae</taxon>
        <taxon>Candidatus Amoebophilus</taxon>
    </lineage>
</organism>